<sequence length="143" mass="16897">MSQPFWQVKTLDQMTDEEWESLCDGCGQCCLHKLMDDDTDEIYFTNVACNQLNIKTCQCKNYEDRFRYEPDCIKLTRYNLPTFAWLPITCAYRLLEEGKPLLPWHPLIKGSKSAMHSERISVRHIAVREIDVVEWEDHIINKP</sequence>
<name>Y2141_PHOLL</name>
<feature type="chain" id="PRO_0000214584" description="UPF0260 protein plu2141">
    <location>
        <begin position="1"/>
        <end position="143"/>
    </location>
</feature>
<organism>
    <name type="scientific">Photorhabdus laumondii subsp. laumondii (strain DSM 15139 / CIP 105565 / TT01)</name>
    <name type="common">Photorhabdus luminescens subsp. laumondii</name>
    <dbReference type="NCBI Taxonomy" id="243265"/>
    <lineage>
        <taxon>Bacteria</taxon>
        <taxon>Pseudomonadati</taxon>
        <taxon>Pseudomonadota</taxon>
        <taxon>Gammaproteobacteria</taxon>
        <taxon>Enterobacterales</taxon>
        <taxon>Morganellaceae</taxon>
        <taxon>Photorhabdus</taxon>
    </lineage>
</organism>
<keyword id="KW-1185">Reference proteome</keyword>
<accession>Q7N519</accession>
<proteinExistence type="inferred from homology"/>
<comment type="similarity">
    <text evidence="1">Belongs to the UPF0260 family.</text>
</comment>
<reference key="1">
    <citation type="journal article" date="2003" name="Nat. Biotechnol.">
        <title>The genome sequence of the entomopathogenic bacterium Photorhabdus luminescens.</title>
        <authorList>
            <person name="Duchaud E."/>
            <person name="Rusniok C."/>
            <person name="Frangeul L."/>
            <person name="Buchrieser C."/>
            <person name="Givaudan A."/>
            <person name="Taourit S."/>
            <person name="Bocs S."/>
            <person name="Boursaux-Eude C."/>
            <person name="Chandler M."/>
            <person name="Charles J.-F."/>
            <person name="Dassa E."/>
            <person name="Derose R."/>
            <person name="Derzelle S."/>
            <person name="Freyssinet G."/>
            <person name="Gaudriault S."/>
            <person name="Medigue C."/>
            <person name="Lanois A."/>
            <person name="Powell K."/>
            <person name="Siguier P."/>
            <person name="Vincent R."/>
            <person name="Wingate V."/>
            <person name="Zouine M."/>
            <person name="Glaser P."/>
            <person name="Boemare N."/>
            <person name="Danchin A."/>
            <person name="Kunst F."/>
        </authorList>
    </citation>
    <scope>NUCLEOTIDE SEQUENCE [LARGE SCALE GENOMIC DNA]</scope>
    <source>
        <strain>DSM 15139 / CIP 105565 / TT01</strain>
    </source>
</reference>
<protein>
    <recommendedName>
        <fullName evidence="1">UPF0260 protein plu2141</fullName>
    </recommendedName>
</protein>
<dbReference type="EMBL" id="BX571866">
    <property type="protein sequence ID" value="CAE14434.1"/>
    <property type="molecule type" value="Genomic_DNA"/>
</dbReference>
<dbReference type="RefSeq" id="WP_011146395.1">
    <property type="nucleotide sequence ID" value="NC_005126.1"/>
</dbReference>
<dbReference type="STRING" id="243265.plu2141"/>
<dbReference type="GeneID" id="48848421"/>
<dbReference type="KEGG" id="plu:plu2141"/>
<dbReference type="eggNOG" id="COG2983">
    <property type="taxonomic scope" value="Bacteria"/>
</dbReference>
<dbReference type="HOGENOM" id="CLU_109769_0_1_6"/>
<dbReference type="OrthoDB" id="9786855at2"/>
<dbReference type="Proteomes" id="UP000002514">
    <property type="component" value="Chromosome"/>
</dbReference>
<dbReference type="HAMAP" id="MF_00676">
    <property type="entry name" value="UPF0260"/>
    <property type="match status" value="1"/>
</dbReference>
<dbReference type="InterPro" id="IPR005358">
    <property type="entry name" value="Puta_zinc/iron-chelating_dom"/>
</dbReference>
<dbReference type="InterPro" id="IPR008228">
    <property type="entry name" value="UCP006173"/>
</dbReference>
<dbReference type="NCBIfam" id="NF003498">
    <property type="entry name" value="PRK05170.1-1"/>
    <property type="match status" value="1"/>
</dbReference>
<dbReference type="NCBIfam" id="NF003501">
    <property type="entry name" value="PRK05170.1-5"/>
    <property type="match status" value="1"/>
</dbReference>
<dbReference type="NCBIfam" id="NF003503">
    <property type="entry name" value="PRK05170.2-1"/>
    <property type="match status" value="1"/>
</dbReference>
<dbReference type="NCBIfam" id="NF003507">
    <property type="entry name" value="PRK05170.2-5"/>
    <property type="match status" value="1"/>
</dbReference>
<dbReference type="PANTHER" id="PTHR37421">
    <property type="entry name" value="UPF0260 PROTEIN YCGN"/>
    <property type="match status" value="1"/>
</dbReference>
<dbReference type="PANTHER" id="PTHR37421:SF1">
    <property type="entry name" value="UPF0260 PROTEIN YCGN"/>
    <property type="match status" value="1"/>
</dbReference>
<dbReference type="Pfam" id="PF03692">
    <property type="entry name" value="CxxCxxCC"/>
    <property type="match status" value="1"/>
</dbReference>
<dbReference type="PIRSF" id="PIRSF006173">
    <property type="entry name" value="UCP006173"/>
    <property type="match status" value="1"/>
</dbReference>
<gene>
    <name type="ordered locus">plu2141</name>
</gene>
<evidence type="ECO:0000255" key="1">
    <source>
        <dbReference type="HAMAP-Rule" id="MF_00676"/>
    </source>
</evidence>